<reference key="1">
    <citation type="journal article" date="1988" name="Nucleic Acids Res.">
        <title>Cloning and sequencing of cDNAs encoding the two subunits of Crotoxin.</title>
        <authorList>
            <person name="Ducancel F."/>
            <person name="Guignery Frelat G."/>
            <person name="Menez A."/>
            <person name="Boulain J.-C."/>
            <person name="Bouchier C."/>
            <person name="Bon C."/>
        </authorList>
    </citation>
    <scope>NUCLEOTIDE SEQUENCE [MRNA]</scope>
    <source>
        <tissue>Venom gland</tissue>
    </source>
</reference>
<reference key="2">
    <citation type="journal article" date="1991" name="Biochemistry">
        <title>Multiplicity of acidic subunit isoforms of crotoxin, the phospholipase A2 neurotoxin from Crotalus durissus terrificus venom, results from posttranslational modifications.</title>
        <authorList>
            <person name="Faure G."/>
            <person name="Guilaume J.-L."/>
            <person name="Camoin L."/>
            <person name="Saliou B."/>
            <person name="Bon C."/>
        </authorList>
    </citation>
    <scope>PROTEIN SEQUENCE OF 38-78; 83-118 AND 125-138 (CA1; CA2; CA3 AND CA4)</scope>
    <scope>PYROGLUTAMATE FORMATION AT GLN-84 AND GLN-125</scope>
    <source>
        <tissue>Venom</tissue>
    </source>
</reference>
<reference key="3">
    <citation type="journal article" date="1985" name="Biochemistry">
        <title>Rattlesnake presynaptic neurotoxins: primary structure and evolutionary origin of the acidic subunit.</title>
        <authorList>
            <person name="Aird S.D."/>
            <person name="Kaiser I.I."/>
            <person name="Lewis R.V."/>
            <person name="Kruggel W.G."/>
        </authorList>
    </citation>
    <scope>PROTEIN SEQUENCE OF 39-76; 95-118 AND 125-138</scope>
    <source>
        <tissue>Venom</tissue>
    </source>
</reference>
<reference key="4">
    <citation type="journal article" date="1990" name="Biochim. Biophys. Acta">
        <title>The amino acid sequence of the acidic subunit B-chain of crotoxin.</title>
        <authorList>
            <person name="Aird S.D."/>
            <person name="Yates J.R. III"/>
            <person name="Martino P.A."/>
            <person name="Shabanowitz J."/>
            <person name="Hunt D.F."/>
            <person name="Kaiser I.I."/>
        </authorList>
    </citation>
    <scope>PROTEIN SEQUENCE OF 84-118</scope>
    <source>
        <tissue>Venom</tissue>
    </source>
</reference>
<reference key="5">
    <citation type="journal article" date="2008" name="Peptides">
        <title>Crotalphine, a novel potent analgesic peptide from the venom of the South American rattlesnake Crotalus durissus terrificus.</title>
        <authorList>
            <person name="Konno K."/>
            <person name="Picolo G."/>
            <person name="Gutierrez V.P."/>
            <person name="Brigatte P."/>
            <person name="Zambelli V.O."/>
            <person name="Camargo A.C."/>
            <person name="Cury Y."/>
        </authorList>
    </citation>
    <scope>PROTEIN SEQUENCE OF 125-138</scope>
    <scope>MASS SPECTROMETRY</scope>
    <scope>SYNTHESIS OF 125-138</scope>
    <scope>FUNCTION</scope>
    <scope>MUTAGENESIS OF GLN-136</scope>
    <scope>DISULFIDE BOND</scope>
    <source>
        <tissue>Venom</tissue>
    </source>
</reference>
<reference key="6">
    <citation type="journal article" date="1993" name="Eur. J. Biochem.">
        <title>Comparison of crotoxin isoforms reveals that stability of the complex plays a major role in its pharmacological action.</title>
        <authorList>
            <person name="Faure G."/>
            <person name="Harvey A.L."/>
            <person name="Thomson E."/>
            <person name="Saliou B."/>
            <person name="Radvanyi F."/>
            <person name="Bon C."/>
        </authorList>
    </citation>
    <scope>BIOPHYSICOCHEMICAL PROPERTIES</scope>
    <scope>SUBUNIT</scope>
    <scope>LETHAL DOSES</scope>
</reference>
<reference key="7">
    <citation type="journal article" date="2000" name="Eur. J. Biochem.">
        <title>Interaction of the neurotoxic and nontoxic secretory phospholipases A2 with the crotoxin inhibitor from Crotalus serum.</title>
        <authorList>
            <person name="Faure G."/>
            <person name="Villela C."/>
            <person name="Perales J."/>
            <person name="Bon C."/>
        </authorList>
    </citation>
    <scope>INHIBITION OF CROTOXIN BY CICS</scope>
</reference>
<reference key="8">
    <citation type="journal article" date="2002" name="Clin. Cancer Res.">
        <title>Phase I and pharmacokinetics study of crotoxin (cytotoxic PLA(2), NSC-624244) in patients with advanced cancer.</title>
        <authorList>
            <person name="Cura J.E."/>
            <person name="Blanzaco D.P."/>
            <person name="Brisson C."/>
            <person name="Cura M.A."/>
            <person name="Cabrol R."/>
            <person name="Larrateguy L."/>
            <person name="Mendez C."/>
            <person name="Sechi J.C."/>
            <person name="Silveira J.S."/>
            <person name="Theiller E."/>
            <person name="de Roodt A.R."/>
            <person name="Vidal J.C."/>
        </authorList>
    </citation>
    <scope>PHARMACEUTICAL</scope>
</reference>
<reference key="9">
    <citation type="journal article" date="2003" name="Toxicon">
        <title>Crotoxin acceptor protein isolated from Torpedo electric organ: binding properties to crotoxin by surface plasmon resonance.</title>
        <authorList>
            <person name="Faure G."/>
            <person name="Copic A."/>
            <person name="Le Porrier S."/>
            <person name="Gubensek F."/>
            <person name="Bon C."/>
            <person name="Krizaj I."/>
        </authorList>
    </citation>
    <scope>FUNCTION</scope>
</reference>
<reference key="10">
    <citation type="journal article" date="2008" name="Eur. J. Pharmacol.">
        <title>Crotalphine induces potent antinociception in neuropathic pain by acting at peripheral opioid receptors.</title>
        <authorList>
            <person name="Gutierrez V.P."/>
            <person name="Konno K."/>
            <person name="Chacur M."/>
            <person name="Sampaio S.C."/>
            <person name="Picolo G."/>
            <person name="Brigatte P."/>
            <person name="Zambelli V.O."/>
            <person name="Cury Y."/>
        </authorList>
    </citation>
    <scope>FUNCTION (CROTOXIN CHAIN GAMMA)</scope>
</reference>
<reference key="11">
    <citation type="journal article" date="2010" name="Toxicon">
        <title>Crotoxin: novel activities for a classic beta-neurotoxin.</title>
        <authorList>
            <person name="Sampaio S.C."/>
            <person name="Hyslop S."/>
            <person name="Fontes M.R."/>
            <person name="Prado-Franceschi J."/>
            <person name="Zambelli V.O."/>
            <person name="Magro A.J."/>
            <person name="Brigatte P."/>
            <person name="Gutierrez V.P."/>
            <person name="Cury Y."/>
        </authorList>
    </citation>
    <scope>REVIEW</scope>
</reference>
<reference key="12">
    <citation type="journal article" date="2014" name="Br. J. Pharmacol.">
        <title>Peripheral interactions between cannabinoid and opioid systems contribute to the antinociceptive effect of crotalphine.</title>
        <authorList>
            <person name="Machado F.C."/>
            <person name="Zambelli V.O."/>
            <person name="Fernandes A.C."/>
            <person name="Heimann A.S."/>
            <person name="Cury Y."/>
            <person name="Picolo G."/>
        </authorList>
    </citation>
    <scope>FUNCTION (CROTOXIN CHAIN GAMMA)</scope>
    <scope>SYNTHESIS OF 125-138</scope>
</reference>
<reference key="13">
    <citation type="journal article" date="2011" name="J. Mol. Biol.">
        <title>Crystal structure of crotoxin reveals key residues involved in the stability and toxicity of this potent heterodimeric beta-neurotoxin.</title>
        <authorList>
            <person name="Faure G."/>
            <person name="Xu H."/>
            <person name="Saul F.A."/>
        </authorList>
    </citation>
    <scope>X-RAY CRYSTALLOGRAPHY (1.35 ANGSTROMS) OF 38-118 IN COMPLEX WITH CROTOXIN CBB SUBUNIT</scope>
    <scope>SITES</scope>
    <scope>DISULFIDE BONDS</scope>
    <source>
        <tissue>Venom</tissue>
    </source>
</reference>
<accession>P08878</accession>
<feature type="signal peptide" evidence="4">
    <location>
        <begin position="1"/>
        <end position="37"/>
    </location>
</feature>
<feature type="chain" id="PRO_0000420453" description="Crotoxin chain alpha CA3" evidence="4">
    <location>
        <begin position="38"/>
        <end position="78"/>
    </location>
</feature>
<feature type="chain" id="PRO_0000022854" description="Crotoxin chain alpha CA1, CA2 and CA4">
    <location>
        <begin position="38"/>
        <end position="76"/>
    </location>
</feature>
<feature type="propeptide" id="PRO_0000022855" evidence="4">
    <location>
        <begin position="79"/>
        <end position="82"/>
    </location>
</feature>
<feature type="chain" id="PRO_0000420454" description="Crotoxin chain beta CA1" evidence="4">
    <location>
        <begin position="83"/>
        <end position="118"/>
    </location>
</feature>
<feature type="chain" id="PRO_0000022856" description="Crotoxin chain beta CA2, CA3 and CA4" evidence="8">
    <location>
        <begin position="84"/>
        <end position="118"/>
    </location>
</feature>
<feature type="propeptide" id="PRO_0000022857">
    <location>
        <begin position="119"/>
        <end position="124"/>
    </location>
</feature>
<feature type="chain" id="PRO_0000022858" description="Crotoxin chain gamma" evidence="3 4 10">
    <location>
        <begin position="125"/>
        <end position="138"/>
    </location>
</feature>
<feature type="site" description="Binds Val-18 of CBb" evidence="7">
    <location>
        <position position="43"/>
    </location>
</feature>
<feature type="site" description="Binds Asn-16 of CBb" evidence="7">
    <location>
        <position position="45"/>
    </location>
</feature>
<feature type="site" description="Binds Val-18 of CBb" evidence="7">
    <location>
        <position position="45"/>
    </location>
</feature>
<feature type="site" description="Binds Arg-14 of CBb" evidence="7">
    <location>
        <position position="49"/>
    </location>
</feature>
<feature type="site" description="Binds Gly-31 of CBb" evidence="7">
    <location>
        <position position="93"/>
    </location>
</feature>
<feature type="site" description="Binds Trp-61 of CA2, important for stability (Asp-89)" evidence="7">
    <location>
        <position position="95"/>
    </location>
</feature>
<feature type="site" description="Binds Trp-30 of CA2, important for stability (Asp-99)" evidence="7">
    <location>
        <position position="105"/>
    </location>
</feature>
<feature type="modified residue" description="Pyrrolidone carboxylic acid" evidence="4">
    <location>
        <position position="84"/>
    </location>
</feature>
<feature type="modified residue" description="Pyrrolidone carboxylic acid" evidence="4">
    <location>
        <position position="125"/>
    </location>
</feature>
<feature type="disulfide bond" description="Interchain (between alpha and gamma chains); alternate" evidence="7">
    <location>
        <begin position="42"/>
        <end position="131"/>
    </location>
</feature>
<feature type="disulfide bond" evidence="7">
    <location>
        <begin position="44"/>
        <end position="60"/>
    </location>
</feature>
<feature type="disulfide bond" description="Interchain (between alpha and beta chains)" evidence="7">
    <location>
        <begin position="59"/>
        <end position="111"/>
    </location>
</feature>
<feature type="disulfide bond" description="Interchain (between alpha and gamma chains); alternate" evidence="7">
    <location>
        <begin position="65"/>
        <end position="138"/>
    </location>
</feature>
<feature type="disulfide bond" description="Interchain (between alpha and beta chains)" evidence="7">
    <location>
        <begin position="66"/>
        <end position="104"/>
    </location>
</feature>
<feature type="disulfide bond" description="Interchain (between alpha and beta chains)" evidence="7">
    <location>
        <begin position="73"/>
        <end position="97"/>
    </location>
</feature>
<feature type="disulfide bond" evidence="7">
    <location>
        <begin position="91"/>
        <end position="102"/>
    </location>
</feature>
<feature type="disulfide bond" description="Intrachain; alternate" evidence="3">
    <location>
        <begin position="131"/>
        <end position="138"/>
    </location>
</feature>
<feature type="mutagenesis site" description="No change in analgesic activity." evidence="3">
    <original>Q</original>
    <variation>K</variation>
    <location>
        <position position="136"/>
    </location>
</feature>
<feature type="sequence conflict" description="In Ref. 3; AA sequence." evidence="16" ref="3">
    <original>D</original>
    <variation>N</variation>
    <location>
        <position position="74"/>
    </location>
</feature>
<feature type="turn" evidence="18">
    <location>
        <begin position="48"/>
        <end position="50"/>
    </location>
</feature>
<feature type="helix" evidence="18">
    <location>
        <begin position="53"/>
        <end position="68"/>
    </location>
</feature>
<feature type="helix" evidence="18">
    <location>
        <begin position="96"/>
        <end position="116"/>
    </location>
</feature>
<sequence>MRALWIVAVLLVGVEGSLVEFETLMMKIAGRSGISYYSSYGCYCGAGGQGWPQDASDRCCFEHDCCYAKLTGCDPTTDVYTYRQEDGEIVCGEDDPCGTQICECDKAAAICFRNSMDTYDYKYLQFSPENCQGESQPC</sequence>
<dbReference type="EMBL" id="X12606">
    <property type="protein sequence ID" value="CAA31126.1"/>
    <property type="molecule type" value="mRNA"/>
</dbReference>
<dbReference type="PIR" id="S01392">
    <property type="entry name" value="PSRSAT"/>
</dbReference>
<dbReference type="PDB" id="3R0L">
    <property type="method" value="X-ray"/>
    <property type="resolution" value="1.35 A"/>
    <property type="chains" value="A=38-76, B=84-118, C=125-138"/>
</dbReference>
<dbReference type="PDBsum" id="3R0L"/>
<dbReference type="SMR" id="P08878"/>
<dbReference type="ComplexPortal" id="CPX-2467">
    <property type="entry name" value="Crotoxin complex, aCA1/2/4-bCA1-CBb variant"/>
</dbReference>
<dbReference type="ComplexPortal" id="CPX-2468">
    <property type="entry name" value="Crotoxin complex, aCA3-bCA2/3/4-CBb variant"/>
</dbReference>
<dbReference type="ComplexPortal" id="CPX-2751">
    <property type="entry name" value="Crotoxin complex, aCA1/2/4-bCA2/3/4-CBb variant"/>
</dbReference>
<dbReference type="ComplexPortal" id="CPX-2878">
    <property type="entry name" value="Crotoxin complex, aCA3-bCA1-CBb variant"/>
</dbReference>
<dbReference type="ComplexPortal" id="CPX-7301">
    <property type="entry name" value="Crotoxin complex, aCA1/2/4-bCA2/3/4-CBc variant"/>
</dbReference>
<dbReference type="ComplexPortal" id="CPX-7302">
    <property type="entry name" value="Crotoxin complex, aCA1/2/4-bCA1-CBc variant"/>
</dbReference>
<dbReference type="ComplexPortal" id="CPX-7303">
    <property type="entry name" value="Crotoxin complex, aCA3-bCA1-CBc variant"/>
</dbReference>
<dbReference type="ComplexPortal" id="CPX-7304">
    <property type="entry name" value="Crotoxin complex, aCA3-bCA2/3/4-CBc variant"/>
</dbReference>
<dbReference type="ComplexPortal" id="CPX-7321">
    <property type="entry name" value="Crotoxin complex, aCA1/2/4-bCA1-CBa variant"/>
</dbReference>
<dbReference type="ComplexPortal" id="CPX-7322">
    <property type="entry name" value="Crotoxin complex, aCA1/2/4-bCA2/3/4-CBa variant"/>
</dbReference>
<dbReference type="ComplexPortal" id="CPX-7343">
    <property type="entry name" value="Crotoxin complex, aCA3-bCA1-CBa variant"/>
</dbReference>
<dbReference type="ComplexPortal" id="CPX-7344">
    <property type="entry name" value="Crotoxin complex, aCA3-bCA2/3/4-CBa variant"/>
</dbReference>
<dbReference type="ComplexPortal" id="CPX-7362">
    <property type="entry name" value="Crotoxin complex, aCA1/2/4-bCA1-CBd variant"/>
</dbReference>
<dbReference type="ComplexPortal" id="CPX-7363">
    <property type="entry name" value="Crotoxin complex, aCA3-bCA2/3/4-CBd variant"/>
</dbReference>
<dbReference type="ComplexPortal" id="CPX-7364">
    <property type="entry name" value="Crotoxin complex, aCA3-bCA1-CBd variant"/>
</dbReference>
<dbReference type="ComplexPortal" id="CPX-7365">
    <property type="entry name" value="Crotoxin complex, aCA1/2/4-bCA2/3/4-CBd variant"/>
</dbReference>
<dbReference type="ABCD" id="P08878">
    <property type="antibodies" value="1 sequenced antibody"/>
</dbReference>
<dbReference type="SABIO-RK" id="P08878"/>
<dbReference type="EvolutionaryTrace" id="P08878"/>
<dbReference type="GO" id="GO:0005576">
    <property type="term" value="C:extracellular region"/>
    <property type="evidence" value="ECO:0007669"/>
    <property type="project" value="UniProtKB-SubCell"/>
</dbReference>
<dbReference type="GO" id="GO:0005509">
    <property type="term" value="F:calcium ion binding"/>
    <property type="evidence" value="ECO:0007669"/>
    <property type="project" value="InterPro"/>
</dbReference>
<dbReference type="GO" id="GO:0047498">
    <property type="term" value="F:calcium-dependent phospholipase A2 activity"/>
    <property type="evidence" value="ECO:0007669"/>
    <property type="project" value="TreeGrafter"/>
</dbReference>
<dbReference type="GO" id="GO:0005543">
    <property type="term" value="F:phospholipid binding"/>
    <property type="evidence" value="ECO:0007669"/>
    <property type="project" value="TreeGrafter"/>
</dbReference>
<dbReference type="GO" id="GO:0090729">
    <property type="term" value="F:toxin activity"/>
    <property type="evidence" value="ECO:0007669"/>
    <property type="project" value="UniProtKB-KW"/>
</dbReference>
<dbReference type="GO" id="GO:0050482">
    <property type="term" value="P:arachidonate secretion"/>
    <property type="evidence" value="ECO:0007669"/>
    <property type="project" value="InterPro"/>
</dbReference>
<dbReference type="GO" id="GO:0016042">
    <property type="term" value="P:lipid catabolic process"/>
    <property type="evidence" value="ECO:0007669"/>
    <property type="project" value="InterPro"/>
</dbReference>
<dbReference type="GO" id="GO:0042130">
    <property type="term" value="P:negative regulation of T cell proliferation"/>
    <property type="evidence" value="ECO:0007669"/>
    <property type="project" value="TreeGrafter"/>
</dbReference>
<dbReference type="GO" id="GO:0006644">
    <property type="term" value="P:phospholipid metabolic process"/>
    <property type="evidence" value="ECO:0007669"/>
    <property type="project" value="InterPro"/>
</dbReference>
<dbReference type="CDD" id="cd00125">
    <property type="entry name" value="PLA2c"/>
    <property type="match status" value="1"/>
</dbReference>
<dbReference type="FunFam" id="1.20.90.10:FF:000001">
    <property type="entry name" value="Basic phospholipase A2 homolog"/>
    <property type="match status" value="1"/>
</dbReference>
<dbReference type="Gene3D" id="1.20.90.10">
    <property type="entry name" value="Phospholipase A2 domain"/>
    <property type="match status" value="1"/>
</dbReference>
<dbReference type="InterPro" id="IPR001211">
    <property type="entry name" value="PLipase_A2"/>
</dbReference>
<dbReference type="InterPro" id="IPR033112">
    <property type="entry name" value="PLipase_A2_Asp_AS"/>
</dbReference>
<dbReference type="InterPro" id="IPR016090">
    <property type="entry name" value="PLipase_A2_dom"/>
</dbReference>
<dbReference type="InterPro" id="IPR036444">
    <property type="entry name" value="PLipase_A2_dom_sf"/>
</dbReference>
<dbReference type="InterPro" id="IPR033113">
    <property type="entry name" value="PLipase_A2_His_AS"/>
</dbReference>
<dbReference type="PANTHER" id="PTHR11716">
    <property type="entry name" value="PHOSPHOLIPASE A2 FAMILY MEMBER"/>
    <property type="match status" value="1"/>
</dbReference>
<dbReference type="PANTHER" id="PTHR11716:SF9">
    <property type="entry name" value="PHOSPHOLIPASE A2, MEMBRANE ASSOCIATED"/>
    <property type="match status" value="1"/>
</dbReference>
<dbReference type="Pfam" id="PF00068">
    <property type="entry name" value="Phospholip_A2_1"/>
    <property type="match status" value="1"/>
</dbReference>
<dbReference type="PRINTS" id="PR00389">
    <property type="entry name" value="PHPHLIPASEA2"/>
</dbReference>
<dbReference type="SMART" id="SM00085">
    <property type="entry name" value="PA2c"/>
    <property type="match status" value="1"/>
</dbReference>
<dbReference type="SUPFAM" id="SSF48619">
    <property type="entry name" value="Phospholipase A2, PLA2"/>
    <property type="match status" value="1"/>
</dbReference>
<dbReference type="PROSITE" id="PS00119">
    <property type="entry name" value="PA2_ASP"/>
    <property type="match status" value="1"/>
</dbReference>
<dbReference type="PROSITE" id="PS00118">
    <property type="entry name" value="PA2_HIS"/>
    <property type="match status" value="1"/>
</dbReference>
<keyword id="KW-0002">3D-structure</keyword>
<keyword id="KW-0903">Direct protein sequencing</keyword>
<keyword id="KW-1015">Disulfide bond</keyword>
<keyword id="KW-1213">G-protein coupled receptor impairing toxin</keyword>
<keyword id="KW-0528">Neurotoxin</keyword>
<keyword id="KW-0582">Pharmaceutical</keyword>
<keyword id="KW-0638">Presynaptic neurotoxin</keyword>
<keyword id="KW-0873">Pyrrolidone carboxylic acid</keyword>
<keyword id="KW-0964">Secreted</keyword>
<keyword id="KW-0732">Signal</keyword>
<keyword id="KW-0800">Toxin</keyword>
<comment type="function">
    <text evidence="7">CAalpha-CAbeta-CAgamma: The acidic subunit of crotoxin (CA) is a heterotrimer of three disulfide-linked chains generated by post-translational maturation of a PLA2-like precursor. CA has no PLA2 activity and is not neurotoxic by itself, but plays several important functions in the crotoxin complex by increasing the lethal potency of the uncomplexed CB subunit. It acts by physically occluding the hydrophobic interfacial binding surface (IBS) of CB (PubMed:21787789). This effect decreases the adsorption of CB to phospholipid membranes, targeting the crotoxin complex to reach the specific presynaptic receptor (R48) at the neuromuscular junction. It also prevents the formation of the reactive CB dimer. Moreover, the CA subunit inhibits the catalytic activity by partially masking the catalytic site of CB (PubMed:21787789) and inhibits its anticoagulant activity.</text>
</comment>
<comment type="function">
    <text evidence="2 6">Heterodimer CA-CB: Crotoxin is a potent presynaptic neurotoxin that possesses phospholipase A2 (PLA2) activity and exerts a lethal action by blocking neuromuscular transmission. It consists of a non-covalent association of a basic and weakly toxic PLA2 subunit (CBa2, CBb, CBc, or CBd), with a small acidic, non-enzymatic and non-toxic subunit (CA1, CA2, CA3 or CA4). The complex acts by binding to a specific 48-kDa protein (R48/CAPT) receptor located on presynaptic membranes, forming a transient ternary complex CA-CB-R48, followed by dissociation of the CA-CB complex and release of the CA subunit (PubMed:12657321). At equilibrium, only the CB subunits remain associated with the specific crotoxin receptor. In addition to neurotoxicity, crotoxin has been found to exert myotoxicity, nephrotoxicity, and cardiovascular toxicity (PubMed:20109480). Moreover, anti-inflammatory, immunomodulatory, anti-tumor and analgesic effects of crotoxin have also been reported (PubMed:20109480).</text>
</comment>
<comment type="function">
    <molecule>Crotoxin chain gamma</molecule>
    <text evidence="3 5 9">Found in the venom as a monomer and stabilized by one disulfide bond (Cys-131 and Cys-138) (PubMed:18495297). This peptide induces potent antinociceptive effects in acute and chronic pain models (PubMed:18495297, PubMed:18703042). This effect is mediated by the release of peripheral dynorphin A, an endogenous agonist of kappa-opioid receptors, and this release is dependent on cannabinoid receptor CB2 activation (PubMed:24460677).</text>
</comment>
<comment type="biophysicochemical properties">
    <kinetics>
        <KM evidence="11">0.05 uM for 1-palmitoyl-2-(10-pyrenyldecanoyl)-sn-glycero-3-monomethyl phosphatidic acid (class 2 heterodimer CA2-CBa2)</KM>
        <KM evidence="11">0.05 uM for 1-palmitoyl-2-(10-pyrenyldecanoyl)-sn-glycero-3-monomethyl phosphatidic acid (class 2 heterodimer CA3-CBa2)</KM>
        <KM evidence="11">0.3 uM for 1-palmitoyl-2-(10-pyrenyldecanoyl)-sn-glycero-3-monomethyl phosphatidic acid (class 2 heterodimer CA2-CBb)</KM>
        <KM evidence="11">0.2 uM for 1-palmitoyl-2-(10-pyrenyldecanoyl)-sn-glycero-3-monomethyl phosphatidic acid (class 2 heterodimer CA3-CBb)</KM>
        <KM evidence="11">0.22 uM for 1-palmitoyl-2-(10-pyrenyldecanoyl)-sn-glycero-3-monomethyl phosphatidic acid (class 2 heterodimer CA2-CBc)</KM>
        <KM evidence="11">0.2 uM for 1-palmitoyl-2-(10-pyrenyldecanoyl)-sn-glycero-3-monomethyl phosphatidic acid (class 2 heterodimer CA3-CBc)</KM>
        <KM evidence="11">0.35 uM for 1-palmitoyl-2-(10-pyrenyldecanoyl)-sn-glycero-3-monomethyl phosphatidic acid (class 2 heterodimer CA2-CBd)</KM>
        <KM evidence="11">0.3 uM for 1-palmitoyl-2-(10-pyrenyldecanoyl)-sn-glycero-3-monomethyl phosphatidic acid (class 2 heterodimer CA3-CBd)</KM>
        <Vmax evidence="11">25.0 umol/min/mg enzyme (class 2 heterodimer CA2-CBa2)</Vmax>
        <Vmax evidence="11">24.0 umol/min/mg enzyme (class 2 heterodimer CA3-CBa2)</Vmax>
        <Vmax evidence="11">10.0 umol/min/mg enzyme (class 2 heterodimer CA2-CBb)</Vmax>
        <Vmax evidence="11">9.0 umol/min/mg enzyme (class 2 heterodimer CA3-CBb)</Vmax>
        <Vmax evidence="11">7.0 umol/min/mg enzyme (class 2 heterodimer CA2-CBc)</Vmax>
        <Vmax evidence="11">6.6 umol/min/mg enzyme (class 2 heterodimer CA3-CBc)</Vmax>
        <Vmax evidence="11">4.6 umol/min/mg enzyme (class 2 heterodimer CA2-CBd)</Vmax>
        <Vmax evidence="11">4.0 umol/min/mg enzyme (class 2 heterodimer CA3-CBd)</Vmax>
    </kinetics>
</comment>
<comment type="subunit">
    <text evidence="7 11">Heterodimer of one of the acidic (CA1, CA2, CA3 or CA4) and one of the basic (CBa1, CBa2, CBb, CBc or CBd) subunits; non-covalently linked. The acidic subunit is non-toxic, without enzymatic activity and comprises 3 peptides that are cross-linked by 5 disulfide bridges. The basic subunit is toxic, has phospholipase A2 activity and is composed of a single chain. Multiple variants of each subunit give different crotoxin complexes that can be subdivided into 2 classes: (1) those of high toxicity, low PLA2 activity (CBb, CBc and CBd linked with high affinity to any CA) and high stability (K(d)=4.5 nM) and (2) those of moderate toxicity, high PLA2 activity (CBa2 linked with low affinity to any CA) and low stability (K(d)=25 nM).</text>
</comment>
<comment type="subcellular location">
    <subcellularLocation>
        <location>Secreted</location>
    </subcellularLocation>
</comment>
<comment type="tissue specificity">
    <text>Expressed by the venom gland.</text>
</comment>
<comment type="mass spectrometry">
    <molecule>Crotoxin chain gamma</molecule>
    <text>Monoisotopic mass.</text>
</comment>
<comment type="toxic dose">
    <text evidence="11">In class 2 heterodimer CA2-CBa2, LD(50) is 420 ug/kg by intravenous injection into mice.</text>
</comment>
<comment type="toxic dose">
    <text evidence="11">In class 2 heterodimer CA2-CBa2, LD(50) is 650 ug/kg by subcutaneous injection into mice.</text>
</comment>
<comment type="toxic dose">
    <text evidence="11">In class 2 heterodimer CA3-CBa2, LD(50) is 450 ug/kg by intravenous injection into mice.</text>
</comment>
<comment type="toxic dose">
    <text evidence="11">In class 1 heterodimer CA2-CBb, LD(50) is 110 ug/kg by intravenous injection into mice.</text>
</comment>
<comment type="toxic dose">
    <text evidence="11">In class 1 heterodimer CA3-CBb, LD(50) is 95 ug/kg by intravenous injection into mice.</text>
</comment>
<comment type="toxic dose">
    <text evidence="11">In class 1 heterodimer CA2-CBc, LD(50) is 80 ug/kg by intravenous injection into mice.</text>
</comment>
<comment type="toxic dose">
    <text evidence="11">In class 1 heterodimer CA3-CBc, LD(50) is 110 ug/kg by intravenous injection into mice.</text>
</comment>
<comment type="toxic dose">
    <text evidence="11">In class 1 heterodimer CA2-CBd, LD(50) is 70 ug/kg by intravenous injection into mice.</text>
</comment>
<comment type="toxic dose">
    <text evidence="11">In class 1 heterodimer CA2-CBd, LD(50) is 150 ug/kg by subcutaneous injection into mice.</text>
</comment>
<comment type="toxic dose">
    <text evidence="11">In class 1 heterodimer CA3-CBd, LD(50) is 90 ug/kg by intravenous injection into mice.</text>
</comment>
<comment type="pharmaceutical">
    <text>Crotoxin (CA-CBc) is under phase II clinical trial as an anti-tumor drug.</text>
</comment>
<comment type="miscellaneous">
    <text evidence="1 17">The crotoxin heterodimer is inhibited by the crotoxin inhibitor from Crotalus serum (CICS). CICS neutralizes the lethal potency of crotoxin and inhibits its PLA2 activity. CICS only binds tightly to the CB subunit and induces the dissociation of the heterodimer (By similarity). Tested on the CA2-CBd heterodimer (PubMed:10903514).</text>
</comment>
<comment type="similarity">
    <text evidence="16">Belongs to the phospholipase A2 family. Group II subfamily. D49 sub-subfamily.</text>
</comment>
<protein>
    <recommendedName>
        <fullName>Phospholipase A2 homolog crotoxin acid subunit CA</fullName>
        <shortName>CTX subunit CA</shortName>
    </recommendedName>
    <alternativeName>
        <fullName>Crotapotin</fullName>
    </alternativeName>
    <component>
        <recommendedName>
            <fullName evidence="13">Crotoxin chain alpha CA1, CA2 and CA4</fullName>
        </recommendedName>
    </component>
    <component>
        <recommendedName>
            <fullName evidence="13">Crotoxin chain alpha CA3</fullName>
        </recommendedName>
    </component>
    <component>
        <recommendedName>
            <fullName evidence="13">Crotoxin chain beta CA2, CA3 and CA4</fullName>
        </recommendedName>
    </component>
    <component>
        <recommendedName>
            <fullName evidence="13">Crotoxin chain beta CA1</fullName>
        </recommendedName>
    </component>
    <component>
        <recommendedName>
            <fullName evidence="13">Crotoxin chain gamma</fullName>
        </recommendedName>
        <alternativeName>
            <fullName evidence="12">Analgesic peptide</fullName>
        </alternativeName>
        <alternativeName>
            <fullName evidence="12 14 15">Crotalphine</fullName>
        </alternativeName>
    </component>
</protein>
<name>PA2H_CRODU</name>
<proteinExistence type="evidence at protein level"/>
<evidence type="ECO:0000250" key="1"/>
<evidence type="ECO:0000269" key="2">
    <source>
    </source>
</evidence>
<evidence type="ECO:0000269" key="3">
    <source>
    </source>
</evidence>
<evidence type="ECO:0000269" key="4">
    <source>
    </source>
</evidence>
<evidence type="ECO:0000269" key="5">
    <source>
    </source>
</evidence>
<evidence type="ECO:0000269" key="6">
    <source>
    </source>
</evidence>
<evidence type="ECO:0000269" key="7">
    <source>
    </source>
</evidence>
<evidence type="ECO:0000269" key="8">
    <source>
    </source>
</evidence>
<evidence type="ECO:0000269" key="9">
    <source>
    </source>
</evidence>
<evidence type="ECO:0000269" key="10">
    <source>
    </source>
</evidence>
<evidence type="ECO:0000269" key="11">
    <source>
    </source>
</evidence>
<evidence type="ECO:0000303" key="12">
    <source>
    </source>
</evidence>
<evidence type="ECO:0000303" key="13">
    <source>
    </source>
</evidence>
<evidence type="ECO:0000303" key="14">
    <source>
    </source>
</evidence>
<evidence type="ECO:0000303" key="15">
    <source>
    </source>
</evidence>
<evidence type="ECO:0000305" key="16"/>
<evidence type="ECO:0000305" key="17">
    <source>
    </source>
</evidence>
<evidence type="ECO:0007829" key="18">
    <source>
        <dbReference type="PDB" id="3R0L"/>
    </source>
</evidence>
<organism>
    <name type="scientific">Crotalus durissus terrificus</name>
    <name type="common">South American rattlesnake</name>
    <dbReference type="NCBI Taxonomy" id="8732"/>
    <lineage>
        <taxon>Eukaryota</taxon>
        <taxon>Metazoa</taxon>
        <taxon>Chordata</taxon>
        <taxon>Craniata</taxon>
        <taxon>Vertebrata</taxon>
        <taxon>Euteleostomi</taxon>
        <taxon>Lepidosauria</taxon>
        <taxon>Squamata</taxon>
        <taxon>Bifurcata</taxon>
        <taxon>Unidentata</taxon>
        <taxon>Episquamata</taxon>
        <taxon>Toxicofera</taxon>
        <taxon>Serpentes</taxon>
        <taxon>Colubroidea</taxon>
        <taxon>Viperidae</taxon>
        <taxon>Crotalinae</taxon>
        <taxon>Crotalus</taxon>
    </lineage>
</organism>